<keyword id="KW-0903">Direct protein sequencing</keyword>
<keyword id="KW-0655">Prothrombin activator</keyword>
<keyword id="KW-0677">Repeat</keyword>
<keyword id="KW-0732">Signal</keyword>
<organism>
    <name type="scientific">Staphylococcus aureus</name>
    <dbReference type="NCBI Taxonomy" id="1280"/>
    <lineage>
        <taxon>Bacteria</taxon>
        <taxon>Bacillati</taxon>
        <taxon>Bacillota</taxon>
        <taxon>Bacilli</taxon>
        <taxon>Bacillales</taxon>
        <taxon>Staphylococcaceae</taxon>
        <taxon>Staphylococcus</taxon>
    </lineage>
</organism>
<protein>
    <recommendedName>
        <fullName>Staphylocoagulase</fullName>
    </recommendedName>
</protein>
<name>STC1_STAAU</name>
<reference key="1">
    <citation type="journal article" date="1989" name="Nucleic Acids Res.">
        <title>Nucleotide and deduced amino acid sequences of staphylocoagulase gene from Staphylococcus aureus strain 213.</title>
        <authorList>
            <person name="Kaida S."/>
            <person name="Miyata T."/>
            <person name="Yoshizawa Y."/>
            <person name="Igarashi H."/>
            <person name="Iwanaga S."/>
        </authorList>
    </citation>
    <scope>NUCLEOTIDE SEQUENCE [GENOMIC DNA]</scope>
    <source>
        <strain>213</strain>
    </source>
</reference>
<reference key="2">
    <citation type="journal article" date="1986" name="J. Biol. Chem.">
        <title>The amino acid sequence of the procoagulant- and prothrombin-binding domain isolated from staphylocoagulase.</title>
        <authorList>
            <person name="Kawabata S."/>
            <person name="Miyata T."/>
            <person name="Morita T."/>
            <person name="Miyata T."/>
            <person name="Iwanaga S."/>
            <person name="Igarashi H."/>
        </authorList>
    </citation>
    <scope>PROTEIN SEQUENCE OF 27-350</scope>
    <source>
        <strain>213</strain>
    </source>
</reference>
<feature type="signal peptide" evidence="2">
    <location>
        <begin position="1"/>
        <end position="26"/>
    </location>
</feature>
<feature type="chain" id="PRO_0000022424" description="Staphylocoagulase">
    <location>
        <begin position="27"/>
        <end position="658"/>
    </location>
</feature>
<feature type="repeat" description="1">
    <location>
        <begin position="492"/>
        <end position="518"/>
    </location>
</feature>
<feature type="repeat" description="2">
    <location>
        <begin position="519"/>
        <end position="545"/>
    </location>
</feature>
<feature type="repeat" description="3">
    <location>
        <begin position="546"/>
        <end position="572"/>
    </location>
</feature>
<feature type="repeat" description="4">
    <location>
        <begin position="573"/>
        <end position="599"/>
    </location>
</feature>
<feature type="repeat" description="5">
    <location>
        <begin position="600"/>
        <end position="626"/>
    </location>
</feature>
<feature type="repeat" description="6">
    <location>
        <begin position="627"/>
        <end position="653"/>
    </location>
</feature>
<feature type="region of interest" description="Disordered" evidence="1">
    <location>
        <begin position="391"/>
        <end position="531"/>
    </location>
</feature>
<feature type="region of interest" description="6 X 27 AA tandem repeats of A-R-P-[RT]-[FQY]-[NK]-K-P-S-[EK]-T-N-A-Y-N-V-T-T-[NH]-[QA]-[DN]-G-[TQ]-[VA]-[ST]-Y-G">
    <location>
        <begin position="492"/>
        <end position="653"/>
    </location>
</feature>
<feature type="region of interest" description="Disordered" evidence="1">
    <location>
        <begin position="619"/>
        <end position="658"/>
    </location>
</feature>
<feature type="compositionally biased region" description="Polar residues" evidence="1">
    <location>
        <begin position="391"/>
        <end position="406"/>
    </location>
</feature>
<feature type="compositionally biased region" description="Polar residues" evidence="1">
    <location>
        <begin position="428"/>
        <end position="440"/>
    </location>
</feature>
<feature type="compositionally biased region" description="Polar residues" evidence="1">
    <location>
        <begin position="499"/>
        <end position="514"/>
    </location>
</feature>
<feature type="compositionally biased region" description="Polar residues" evidence="1">
    <location>
        <begin position="521"/>
        <end position="531"/>
    </location>
</feature>
<feature type="compositionally biased region" description="Polar residues" evidence="1">
    <location>
        <begin position="636"/>
        <end position="646"/>
    </location>
</feature>
<feature type="sequence conflict" description="In Ref. 2; AA sequence." evidence="3" ref="2">
    <original>Q</original>
    <variation>L</variation>
    <location>
        <position position="350"/>
    </location>
</feature>
<comment type="function">
    <text>Staphylocoagulase is an extracellular protein which specifically forms a complex with human prothrombin. This complex named staphylothrombin can clot fibrinogen without any proteolytic cleavage of prothrombin.</text>
</comment>
<comment type="domain">
    <text>The C-terminal tandem repeats are not required for the procoagulant activity.</text>
</comment>
<comment type="similarity">
    <text evidence="3">Belongs to the staphylocoagulase family.</text>
</comment>
<evidence type="ECO:0000256" key="1">
    <source>
        <dbReference type="SAM" id="MobiDB-lite"/>
    </source>
</evidence>
<evidence type="ECO:0000269" key="2">
    <source>
    </source>
</evidence>
<evidence type="ECO:0000305" key="3"/>
<proteinExistence type="evidence at protein level"/>
<dbReference type="EMBL" id="X16457">
    <property type="protein sequence ID" value="CAA34476.1"/>
    <property type="molecule type" value="Genomic_DNA"/>
</dbReference>
<dbReference type="PIR" id="S06744">
    <property type="entry name" value="S06744"/>
</dbReference>
<dbReference type="SMR" id="P07767"/>
<dbReference type="PRO" id="PR:P07767"/>
<dbReference type="GO" id="GO:0016504">
    <property type="term" value="F:peptidase activator activity"/>
    <property type="evidence" value="ECO:0007669"/>
    <property type="project" value="UniProtKB-KW"/>
</dbReference>
<dbReference type="Gene3D" id="1.20.120.750">
    <property type="entry name" value="Staphylcoagulase, helix bundle domain 1"/>
    <property type="match status" value="1"/>
</dbReference>
<dbReference type="Gene3D" id="1.20.120.760">
    <property type="entry name" value="Staphylcoagulase, helix bundle, domain 2"/>
    <property type="match status" value="1"/>
</dbReference>
<dbReference type="InterPro" id="IPR043072">
    <property type="entry name" value="Staphylcoagulase_N_1"/>
</dbReference>
<dbReference type="InterPro" id="IPR043071">
    <property type="entry name" value="Staphylcoagulase_N_2"/>
</dbReference>
<dbReference type="InterPro" id="IPR001443">
    <property type="entry name" value="Staphylcoagulase_rpt"/>
</dbReference>
<dbReference type="InterPro" id="IPR014874">
    <property type="entry name" value="Staphylocoagulase_N"/>
</dbReference>
<dbReference type="NCBIfam" id="NF035921">
    <property type="entry name" value="staph_coagu"/>
    <property type="match status" value="1"/>
</dbReference>
<dbReference type="Pfam" id="PF08764">
    <property type="entry name" value="Coagulase"/>
    <property type="match status" value="1"/>
</dbReference>
<dbReference type="Pfam" id="PF04022">
    <property type="entry name" value="Staphylcoagulse"/>
    <property type="match status" value="6"/>
</dbReference>
<dbReference type="SUPFAM" id="SSF101094">
    <property type="entry name" value="Staphylocoagulase"/>
    <property type="match status" value="2"/>
</dbReference>
<dbReference type="PROSITE" id="PS00429">
    <property type="entry name" value="STAPHYLOCOAGULASE"/>
    <property type="match status" value="6"/>
</dbReference>
<accession>P07767</accession>
<sequence length="658" mass="74505">MKKQIISLGALAVASSLFTWDNKADAIVTKDYSKESRVNEKSKKGATVSDYYYWKIIDSLEAQFTGAIDLLENYKYGDPIYKEAKDRLMTRVLGEDQYLLKKKIDEYELYKKWYKSSNKNTNMLTFHKYNLYNLTMNEYNDIFNSLKDAVYQFNKEVKEIEHKNVDLKQFDKDGEDKATKEVYDLVSEIDTLVVTYYADKDYGEHAKELRAKLDLILGDTDNPHKITNERIKKEMIDDLNSIIDDFFMETKQNRPNSITKYDPTKHNFKEKSENKPNFDKLVEETKKAVKEADESWKNKTVKKYEETVTKSPVVKEEKKVEEPQLPKVGNQQEVKTTAGKAEETTQPVAQPLVKIPQETIYGETVKGPEYPTMENKTLQGEIVQGPDFLTMEQNRPSLSDNYTQPTTPNPILEGLEGSSSKLEIKPQGTESTLKGIQGESSDIEVKPQATETTEASQYGPRPQFNKTPKYVKYRDAGTGIREYNDGTFGYEARPRFNKPSETNAYNVTTNQDGTVSYGARPTQNKPSETNAYNVTTHANGQVSYGARPTQNKPSKTNAYNVTTHANGQVSYGARPTQKKPSKTNAYNVTTHANGQVSYGARPTYKKPSETNAYNVTTHANGQVSYGARPTQKKPSETNAYNVTTHADGTATYGPRVTK</sequence>